<dbReference type="EC" id="2.1.1.199" evidence="1"/>
<dbReference type="EMBL" id="CP000941">
    <property type="protein sequence ID" value="ACA12921.1"/>
    <property type="status" value="ALT_INIT"/>
    <property type="molecule type" value="Genomic_DNA"/>
</dbReference>
<dbReference type="SMR" id="B0U504"/>
<dbReference type="KEGG" id="xfm:Xfasm12_2055"/>
<dbReference type="HOGENOM" id="CLU_038422_3_0_6"/>
<dbReference type="GO" id="GO:0005737">
    <property type="term" value="C:cytoplasm"/>
    <property type="evidence" value="ECO:0007669"/>
    <property type="project" value="UniProtKB-SubCell"/>
</dbReference>
<dbReference type="GO" id="GO:0071424">
    <property type="term" value="F:rRNA (cytosine-N4-)-methyltransferase activity"/>
    <property type="evidence" value="ECO:0007669"/>
    <property type="project" value="UniProtKB-UniRule"/>
</dbReference>
<dbReference type="GO" id="GO:0070475">
    <property type="term" value="P:rRNA base methylation"/>
    <property type="evidence" value="ECO:0007669"/>
    <property type="project" value="UniProtKB-UniRule"/>
</dbReference>
<dbReference type="Gene3D" id="1.10.150.170">
    <property type="entry name" value="Putative methyltransferase TM0872, insert domain"/>
    <property type="match status" value="1"/>
</dbReference>
<dbReference type="Gene3D" id="3.40.50.150">
    <property type="entry name" value="Vaccinia Virus protein VP39"/>
    <property type="match status" value="1"/>
</dbReference>
<dbReference type="HAMAP" id="MF_01007">
    <property type="entry name" value="16SrRNA_methyltr_H"/>
    <property type="match status" value="1"/>
</dbReference>
<dbReference type="InterPro" id="IPR002903">
    <property type="entry name" value="RsmH"/>
</dbReference>
<dbReference type="InterPro" id="IPR023397">
    <property type="entry name" value="SAM-dep_MeTrfase_MraW_recog"/>
</dbReference>
<dbReference type="InterPro" id="IPR029063">
    <property type="entry name" value="SAM-dependent_MTases_sf"/>
</dbReference>
<dbReference type="NCBIfam" id="TIGR00006">
    <property type="entry name" value="16S rRNA (cytosine(1402)-N(4))-methyltransferase RsmH"/>
    <property type="match status" value="1"/>
</dbReference>
<dbReference type="PANTHER" id="PTHR11265:SF0">
    <property type="entry name" value="12S RRNA N4-METHYLCYTIDINE METHYLTRANSFERASE"/>
    <property type="match status" value="1"/>
</dbReference>
<dbReference type="PANTHER" id="PTHR11265">
    <property type="entry name" value="S-ADENOSYL-METHYLTRANSFERASE MRAW"/>
    <property type="match status" value="1"/>
</dbReference>
<dbReference type="Pfam" id="PF01795">
    <property type="entry name" value="Methyltransf_5"/>
    <property type="match status" value="1"/>
</dbReference>
<dbReference type="PIRSF" id="PIRSF004486">
    <property type="entry name" value="MraW"/>
    <property type="match status" value="1"/>
</dbReference>
<dbReference type="SUPFAM" id="SSF81799">
    <property type="entry name" value="Putative methyltransferase TM0872, insert domain"/>
    <property type="match status" value="1"/>
</dbReference>
<dbReference type="SUPFAM" id="SSF53335">
    <property type="entry name" value="S-adenosyl-L-methionine-dependent methyltransferases"/>
    <property type="match status" value="1"/>
</dbReference>
<proteinExistence type="inferred from homology"/>
<reference key="1">
    <citation type="journal article" date="2010" name="J. Bacteriol.">
        <title>Whole genome sequences of two Xylella fastidiosa strains (M12 and M23) causing almond leaf scorch disease in California.</title>
        <authorList>
            <person name="Chen J."/>
            <person name="Xie G."/>
            <person name="Han S."/>
            <person name="Chertkov O."/>
            <person name="Sims D."/>
            <person name="Civerolo E.L."/>
        </authorList>
    </citation>
    <scope>NUCLEOTIDE SEQUENCE [LARGE SCALE GENOMIC DNA]</scope>
    <source>
        <strain>M12</strain>
    </source>
</reference>
<name>RSMH_XYLFM</name>
<organism>
    <name type="scientific">Xylella fastidiosa (strain M12)</name>
    <dbReference type="NCBI Taxonomy" id="405440"/>
    <lineage>
        <taxon>Bacteria</taxon>
        <taxon>Pseudomonadati</taxon>
        <taxon>Pseudomonadota</taxon>
        <taxon>Gammaproteobacteria</taxon>
        <taxon>Lysobacterales</taxon>
        <taxon>Lysobacteraceae</taxon>
        <taxon>Xylella</taxon>
    </lineage>
</organism>
<feature type="chain" id="PRO_0000387216" description="Ribosomal RNA small subunit methyltransferase H">
    <location>
        <begin position="1"/>
        <end position="313"/>
    </location>
</feature>
<feature type="binding site" evidence="1">
    <location>
        <begin position="31"/>
        <end position="33"/>
    </location>
    <ligand>
        <name>S-adenosyl-L-methionine</name>
        <dbReference type="ChEBI" id="CHEBI:59789"/>
    </ligand>
</feature>
<feature type="binding site" evidence="1">
    <location>
        <position position="51"/>
    </location>
    <ligand>
        <name>S-adenosyl-L-methionine</name>
        <dbReference type="ChEBI" id="CHEBI:59789"/>
    </ligand>
</feature>
<feature type="binding site" evidence="1">
    <location>
        <position position="77"/>
    </location>
    <ligand>
        <name>S-adenosyl-L-methionine</name>
        <dbReference type="ChEBI" id="CHEBI:59789"/>
    </ligand>
</feature>
<feature type="binding site" evidence="1">
    <location>
        <position position="95"/>
    </location>
    <ligand>
        <name>S-adenosyl-L-methionine</name>
        <dbReference type="ChEBI" id="CHEBI:59789"/>
    </ligand>
</feature>
<feature type="binding site" evidence="1">
    <location>
        <position position="102"/>
    </location>
    <ligand>
        <name>S-adenosyl-L-methionine</name>
        <dbReference type="ChEBI" id="CHEBI:59789"/>
    </ligand>
</feature>
<protein>
    <recommendedName>
        <fullName evidence="1">Ribosomal RNA small subunit methyltransferase H</fullName>
        <ecNumber evidence="1">2.1.1.199</ecNumber>
    </recommendedName>
    <alternativeName>
        <fullName evidence="1">16S rRNA m(4)C1402 methyltransferase</fullName>
    </alternativeName>
    <alternativeName>
        <fullName evidence="1">rRNA (cytosine-N(4)-)-methyltransferase RsmH</fullName>
    </alternativeName>
</protein>
<accession>B0U504</accession>
<comment type="function">
    <text evidence="1">Specifically methylates the N4 position of cytidine in position 1402 (C1402) of 16S rRNA.</text>
</comment>
<comment type="catalytic activity">
    <reaction evidence="1">
        <text>cytidine(1402) in 16S rRNA + S-adenosyl-L-methionine = N(4)-methylcytidine(1402) in 16S rRNA + S-adenosyl-L-homocysteine + H(+)</text>
        <dbReference type="Rhea" id="RHEA:42928"/>
        <dbReference type="Rhea" id="RHEA-COMP:10286"/>
        <dbReference type="Rhea" id="RHEA-COMP:10287"/>
        <dbReference type="ChEBI" id="CHEBI:15378"/>
        <dbReference type="ChEBI" id="CHEBI:57856"/>
        <dbReference type="ChEBI" id="CHEBI:59789"/>
        <dbReference type="ChEBI" id="CHEBI:74506"/>
        <dbReference type="ChEBI" id="CHEBI:82748"/>
        <dbReference type="EC" id="2.1.1.199"/>
    </reaction>
</comment>
<comment type="subcellular location">
    <subcellularLocation>
        <location evidence="1">Cytoplasm</location>
    </subcellularLocation>
</comment>
<comment type="similarity">
    <text evidence="1">Belongs to the methyltransferase superfamily. RsmH family.</text>
</comment>
<comment type="sequence caution" evidence="2">
    <conflict type="erroneous initiation">
        <sequence resource="EMBL-CDS" id="ACA12921"/>
    </conflict>
</comment>
<keyword id="KW-0963">Cytoplasm</keyword>
<keyword id="KW-0489">Methyltransferase</keyword>
<keyword id="KW-0698">rRNA processing</keyword>
<keyword id="KW-0949">S-adenosyl-L-methionine</keyword>
<keyword id="KW-0808">Transferase</keyword>
<sequence length="313" mass="34633">MTHVPVLYTQAMEGLRVVENGTYLDGTFGRGGHARGVLQQLGPGGRLLVMDKDPEAIAMAERVFSCDPRVVIRHGSFALLAQLAAPQSLDGVLFDLGVSSPQLDVPERGFSFAKDGPLDMRMDPEMGESAAQWLARVSEREIAEVLWTYGEEKQSRRIARAIVAYRANQPLLRTVQLAELIASVMLRTKSGACKSRIHPATRSFQGIRIHVNRELVDLEVGLEAALAALRPGGRLVVISFHSLEDRIVKQFISRHAKVPPTNRRLPEVQTFVPLLRMIGRAIKADEDELEVNPRARSAVLRVAEKLDVLEAVR</sequence>
<gene>
    <name evidence="1" type="primary">rsmH</name>
    <name type="synonym">mraW</name>
    <name type="ordered locus">Xfasm12_2055</name>
</gene>
<evidence type="ECO:0000255" key="1">
    <source>
        <dbReference type="HAMAP-Rule" id="MF_01007"/>
    </source>
</evidence>
<evidence type="ECO:0000305" key="2"/>